<organism>
    <name type="scientific">Buchnera aphidicola subsp. Cinara cedri (strain Cc)</name>
    <dbReference type="NCBI Taxonomy" id="372461"/>
    <lineage>
        <taxon>Bacteria</taxon>
        <taxon>Pseudomonadati</taxon>
        <taxon>Pseudomonadota</taxon>
        <taxon>Gammaproteobacteria</taxon>
        <taxon>Enterobacterales</taxon>
        <taxon>Erwiniaceae</taxon>
        <taxon>Buchnera</taxon>
    </lineage>
</organism>
<feature type="chain" id="PRO_0000298484" description="NADH-quinone oxidoreductase subunit I">
    <location>
        <begin position="1"/>
        <end position="181"/>
    </location>
</feature>
<feature type="domain" description="4Fe-4S ferredoxin-type 1" evidence="1">
    <location>
        <begin position="51"/>
        <end position="80"/>
    </location>
</feature>
<feature type="domain" description="4Fe-4S ferredoxin-type 2" evidence="1">
    <location>
        <begin position="90"/>
        <end position="119"/>
    </location>
</feature>
<feature type="binding site" evidence="1">
    <location>
        <position position="60"/>
    </location>
    <ligand>
        <name>[4Fe-4S] cluster</name>
        <dbReference type="ChEBI" id="CHEBI:49883"/>
        <label>1</label>
    </ligand>
</feature>
<feature type="binding site" evidence="1">
    <location>
        <position position="63"/>
    </location>
    <ligand>
        <name>[4Fe-4S] cluster</name>
        <dbReference type="ChEBI" id="CHEBI:49883"/>
        <label>1</label>
    </ligand>
</feature>
<feature type="binding site" evidence="1">
    <location>
        <position position="66"/>
    </location>
    <ligand>
        <name>[4Fe-4S] cluster</name>
        <dbReference type="ChEBI" id="CHEBI:49883"/>
        <label>1</label>
    </ligand>
</feature>
<feature type="binding site" evidence="1">
    <location>
        <position position="70"/>
    </location>
    <ligand>
        <name>[4Fe-4S] cluster</name>
        <dbReference type="ChEBI" id="CHEBI:49883"/>
        <label>2</label>
    </ligand>
</feature>
<feature type="binding site" evidence="1">
    <location>
        <position position="99"/>
    </location>
    <ligand>
        <name>[4Fe-4S] cluster</name>
        <dbReference type="ChEBI" id="CHEBI:49883"/>
        <label>2</label>
    </ligand>
</feature>
<feature type="binding site" evidence="1">
    <location>
        <position position="102"/>
    </location>
    <ligand>
        <name>[4Fe-4S] cluster</name>
        <dbReference type="ChEBI" id="CHEBI:49883"/>
        <label>2</label>
    </ligand>
</feature>
<feature type="binding site" evidence="1">
    <location>
        <position position="105"/>
    </location>
    <ligand>
        <name>[4Fe-4S] cluster</name>
        <dbReference type="ChEBI" id="CHEBI:49883"/>
        <label>2</label>
    </ligand>
</feature>
<feature type="binding site" evidence="1">
    <location>
        <position position="109"/>
    </location>
    <ligand>
        <name>[4Fe-4S] cluster</name>
        <dbReference type="ChEBI" id="CHEBI:49883"/>
        <label>1</label>
    </ligand>
</feature>
<dbReference type="EC" id="7.1.1.-" evidence="1"/>
<dbReference type="EMBL" id="CP000263">
    <property type="protein sequence ID" value="ABJ90581.1"/>
    <property type="molecule type" value="Genomic_DNA"/>
</dbReference>
<dbReference type="RefSeq" id="WP_011672500.1">
    <property type="nucleotide sequence ID" value="NC_008513.1"/>
</dbReference>
<dbReference type="SMR" id="Q057W8"/>
<dbReference type="STRING" id="372461.BCc_104"/>
<dbReference type="KEGG" id="bcc:BCc_104"/>
<dbReference type="eggNOG" id="COG1143">
    <property type="taxonomic scope" value="Bacteria"/>
</dbReference>
<dbReference type="HOGENOM" id="CLU_067218_4_3_6"/>
<dbReference type="OrthoDB" id="9808559at2"/>
<dbReference type="Proteomes" id="UP000000669">
    <property type="component" value="Chromosome"/>
</dbReference>
<dbReference type="GO" id="GO:0005886">
    <property type="term" value="C:plasma membrane"/>
    <property type="evidence" value="ECO:0007669"/>
    <property type="project" value="UniProtKB-SubCell"/>
</dbReference>
<dbReference type="GO" id="GO:0051539">
    <property type="term" value="F:4 iron, 4 sulfur cluster binding"/>
    <property type="evidence" value="ECO:0007669"/>
    <property type="project" value="UniProtKB-KW"/>
</dbReference>
<dbReference type="GO" id="GO:0005506">
    <property type="term" value="F:iron ion binding"/>
    <property type="evidence" value="ECO:0007669"/>
    <property type="project" value="UniProtKB-UniRule"/>
</dbReference>
<dbReference type="GO" id="GO:0050136">
    <property type="term" value="F:NADH:ubiquinone reductase (non-electrogenic) activity"/>
    <property type="evidence" value="ECO:0007669"/>
    <property type="project" value="UniProtKB-UniRule"/>
</dbReference>
<dbReference type="GO" id="GO:0048038">
    <property type="term" value="F:quinone binding"/>
    <property type="evidence" value="ECO:0007669"/>
    <property type="project" value="UniProtKB-KW"/>
</dbReference>
<dbReference type="GO" id="GO:0009060">
    <property type="term" value="P:aerobic respiration"/>
    <property type="evidence" value="ECO:0007669"/>
    <property type="project" value="TreeGrafter"/>
</dbReference>
<dbReference type="Gene3D" id="3.30.70.3270">
    <property type="match status" value="1"/>
</dbReference>
<dbReference type="HAMAP" id="MF_01351">
    <property type="entry name" value="NDH1_NuoI"/>
    <property type="match status" value="1"/>
</dbReference>
<dbReference type="InterPro" id="IPR017896">
    <property type="entry name" value="4Fe4S_Fe-S-bd"/>
</dbReference>
<dbReference type="InterPro" id="IPR017900">
    <property type="entry name" value="4Fe4S_Fe_S_CS"/>
</dbReference>
<dbReference type="InterPro" id="IPR010226">
    <property type="entry name" value="NADH_quinone_OxRdtase_chainI"/>
</dbReference>
<dbReference type="NCBIfam" id="TIGR01971">
    <property type="entry name" value="NuoI"/>
    <property type="match status" value="1"/>
</dbReference>
<dbReference type="NCBIfam" id="NF004536">
    <property type="entry name" value="PRK05888.1-1"/>
    <property type="match status" value="1"/>
</dbReference>
<dbReference type="PANTHER" id="PTHR10849:SF20">
    <property type="entry name" value="NADH DEHYDROGENASE [UBIQUINONE] IRON-SULFUR PROTEIN 8, MITOCHONDRIAL"/>
    <property type="match status" value="1"/>
</dbReference>
<dbReference type="PANTHER" id="PTHR10849">
    <property type="entry name" value="NADH DEHYDROGENASE UBIQUINONE IRON-SULFUR PROTEIN 8, MITOCHONDRIAL"/>
    <property type="match status" value="1"/>
</dbReference>
<dbReference type="Pfam" id="PF12838">
    <property type="entry name" value="Fer4_7"/>
    <property type="match status" value="1"/>
</dbReference>
<dbReference type="SUPFAM" id="SSF54862">
    <property type="entry name" value="4Fe-4S ferredoxins"/>
    <property type="match status" value="1"/>
</dbReference>
<dbReference type="PROSITE" id="PS00198">
    <property type="entry name" value="4FE4S_FER_1"/>
    <property type="match status" value="2"/>
</dbReference>
<dbReference type="PROSITE" id="PS51379">
    <property type="entry name" value="4FE4S_FER_2"/>
    <property type="match status" value="2"/>
</dbReference>
<evidence type="ECO:0000255" key="1">
    <source>
        <dbReference type="HAMAP-Rule" id="MF_01351"/>
    </source>
</evidence>
<reference key="1">
    <citation type="journal article" date="2006" name="Science">
        <title>A small microbial genome: the end of a long symbiotic relationship?</title>
        <authorList>
            <person name="Perez-Brocal V."/>
            <person name="Gil R."/>
            <person name="Ramos S."/>
            <person name="Lamelas A."/>
            <person name="Postigo M."/>
            <person name="Michelena J.M."/>
            <person name="Silva F.J."/>
            <person name="Moya A."/>
            <person name="Latorre A."/>
        </authorList>
    </citation>
    <scope>NUCLEOTIDE SEQUENCE [LARGE SCALE GENOMIC DNA]</scope>
    <source>
        <strain>Cc</strain>
    </source>
</reference>
<protein>
    <recommendedName>
        <fullName evidence="1">NADH-quinone oxidoreductase subunit I</fullName>
        <ecNumber evidence="1">7.1.1.-</ecNumber>
    </recommendedName>
    <alternativeName>
        <fullName evidence="1">NADH dehydrogenase I subunit I</fullName>
    </alternativeName>
    <alternativeName>
        <fullName evidence="1">NDH-1 subunit I</fullName>
    </alternativeName>
</protein>
<comment type="function">
    <text evidence="1">NDH-1 shuttles electrons from NADH, via FMN and iron-sulfur (Fe-S) centers, to quinones in the respiratory chain. The immediate electron acceptor for the enzyme in this species is believed to be ubiquinone. Couples the redox reaction to proton translocation (for every two electrons transferred, four hydrogen ions are translocated across the cytoplasmic membrane), and thus conserves the redox energy in a proton gradient.</text>
</comment>
<comment type="catalytic activity">
    <reaction evidence="1">
        <text>a quinone + NADH + 5 H(+)(in) = a quinol + NAD(+) + 4 H(+)(out)</text>
        <dbReference type="Rhea" id="RHEA:57888"/>
        <dbReference type="ChEBI" id="CHEBI:15378"/>
        <dbReference type="ChEBI" id="CHEBI:24646"/>
        <dbReference type="ChEBI" id="CHEBI:57540"/>
        <dbReference type="ChEBI" id="CHEBI:57945"/>
        <dbReference type="ChEBI" id="CHEBI:132124"/>
    </reaction>
</comment>
<comment type="cofactor">
    <cofactor evidence="1">
        <name>[4Fe-4S] cluster</name>
        <dbReference type="ChEBI" id="CHEBI:49883"/>
    </cofactor>
    <text evidence="1">Binds 2 [4Fe-4S] clusters per subunit.</text>
</comment>
<comment type="subunit">
    <text evidence="1">NDH-1 is composed of 13 different subunits. Subunits NuoA, H, J, K, L, M, N constitute the membrane sector of the complex.</text>
</comment>
<comment type="subcellular location">
    <subcellularLocation>
        <location evidence="1">Cell membrane</location>
        <topology evidence="1">Peripheral membrane protein</topology>
    </subcellularLocation>
</comment>
<comment type="similarity">
    <text evidence="1">Belongs to the complex I 23 kDa subunit family.</text>
</comment>
<gene>
    <name evidence="1" type="primary">nuoI</name>
    <name type="ordered locus">BCc_104</name>
</gene>
<sequence length="181" mass="20776">MNMKNIFLGFLSQIRSILMIFSNIFSFRETRLYPDEPLNLSLRYRGRIILTRNSNGSERCVACNLCSAVCPVNCISLKKSEEKNGRWYAKSFQINLSRCIFCGLCEEACPTMAIQLTPDIELSEFKRKELLYKKKNLLFSGPGKFSKYDFYSISGVNTTYDLKKNLSKKISNCVDVTDLLP</sequence>
<proteinExistence type="inferred from homology"/>
<accession>Q057W8</accession>
<name>NUOI_BUCCC</name>
<keyword id="KW-0004">4Fe-4S</keyword>
<keyword id="KW-1003">Cell membrane</keyword>
<keyword id="KW-0408">Iron</keyword>
<keyword id="KW-0411">Iron-sulfur</keyword>
<keyword id="KW-0472">Membrane</keyword>
<keyword id="KW-0479">Metal-binding</keyword>
<keyword id="KW-0520">NAD</keyword>
<keyword id="KW-0874">Quinone</keyword>
<keyword id="KW-1185">Reference proteome</keyword>
<keyword id="KW-0677">Repeat</keyword>
<keyword id="KW-1278">Translocase</keyword>
<keyword id="KW-0830">Ubiquinone</keyword>